<comment type="catalytic activity">
    <reaction evidence="1">
        <text>tRNA(Lys) + L-lysine + ATP = L-lysyl-tRNA(Lys) + AMP + diphosphate</text>
        <dbReference type="Rhea" id="RHEA:20792"/>
        <dbReference type="Rhea" id="RHEA-COMP:9696"/>
        <dbReference type="Rhea" id="RHEA-COMP:9697"/>
        <dbReference type="ChEBI" id="CHEBI:30616"/>
        <dbReference type="ChEBI" id="CHEBI:32551"/>
        <dbReference type="ChEBI" id="CHEBI:33019"/>
        <dbReference type="ChEBI" id="CHEBI:78442"/>
        <dbReference type="ChEBI" id="CHEBI:78529"/>
        <dbReference type="ChEBI" id="CHEBI:456215"/>
        <dbReference type="EC" id="6.1.1.6"/>
    </reaction>
</comment>
<comment type="cofactor">
    <cofactor evidence="1">
        <name>Mg(2+)</name>
        <dbReference type="ChEBI" id="CHEBI:18420"/>
    </cofactor>
    <text evidence="1">Binds 3 Mg(2+) ions per subunit.</text>
</comment>
<comment type="subunit">
    <text evidence="1">Homodimer.</text>
</comment>
<comment type="subcellular location">
    <subcellularLocation>
        <location evidence="1">Cytoplasm</location>
    </subcellularLocation>
</comment>
<comment type="similarity">
    <text evidence="1">Belongs to the class-II aminoacyl-tRNA synthetase family.</text>
</comment>
<accession>Q64PM9</accession>
<dbReference type="EC" id="6.1.1.6" evidence="1"/>
<dbReference type="EMBL" id="AP006841">
    <property type="protein sequence ID" value="BAD50552.1"/>
    <property type="molecule type" value="Genomic_DNA"/>
</dbReference>
<dbReference type="RefSeq" id="WP_005802230.1">
    <property type="nucleotide sequence ID" value="NC_006347.1"/>
</dbReference>
<dbReference type="RefSeq" id="YP_101086.1">
    <property type="nucleotide sequence ID" value="NC_006347.1"/>
</dbReference>
<dbReference type="SMR" id="Q64PM9"/>
<dbReference type="STRING" id="295405.BF3810"/>
<dbReference type="KEGG" id="bfr:BF3810"/>
<dbReference type="PATRIC" id="fig|295405.11.peg.3658"/>
<dbReference type="HOGENOM" id="CLU_008255_6_0_10"/>
<dbReference type="OrthoDB" id="9801152at2"/>
<dbReference type="Proteomes" id="UP000002197">
    <property type="component" value="Chromosome"/>
</dbReference>
<dbReference type="GO" id="GO:0005829">
    <property type="term" value="C:cytosol"/>
    <property type="evidence" value="ECO:0007669"/>
    <property type="project" value="TreeGrafter"/>
</dbReference>
<dbReference type="GO" id="GO:0005524">
    <property type="term" value="F:ATP binding"/>
    <property type="evidence" value="ECO:0007669"/>
    <property type="project" value="UniProtKB-UniRule"/>
</dbReference>
<dbReference type="GO" id="GO:0004824">
    <property type="term" value="F:lysine-tRNA ligase activity"/>
    <property type="evidence" value="ECO:0007669"/>
    <property type="project" value="UniProtKB-UniRule"/>
</dbReference>
<dbReference type="GO" id="GO:0000287">
    <property type="term" value="F:magnesium ion binding"/>
    <property type="evidence" value="ECO:0007669"/>
    <property type="project" value="UniProtKB-UniRule"/>
</dbReference>
<dbReference type="GO" id="GO:0000049">
    <property type="term" value="F:tRNA binding"/>
    <property type="evidence" value="ECO:0007669"/>
    <property type="project" value="TreeGrafter"/>
</dbReference>
<dbReference type="GO" id="GO:0006430">
    <property type="term" value="P:lysyl-tRNA aminoacylation"/>
    <property type="evidence" value="ECO:0007669"/>
    <property type="project" value="UniProtKB-UniRule"/>
</dbReference>
<dbReference type="CDD" id="cd00775">
    <property type="entry name" value="LysRS_core"/>
    <property type="match status" value="1"/>
</dbReference>
<dbReference type="CDD" id="cd04322">
    <property type="entry name" value="LysRS_N"/>
    <property type="match status" value="1"/>
</dbReference>
<dbReference type="FunFam" id="2.40.50.140:FF:000024">
    <property type="entry name" value="Lysine--tRNA ligase"/>
    <property type="match status" value="1"/>
</dbReference>
<dbReference type="FunFam" id="3.30.930.10:FF:000238">
    <property type="entry name" value="Lysine--tRNA ligase"/>
    <property type="match status" value="1"/>
</dbReference>
<dbReference type="Gene3D" id="3.30.930.10">
    <property type="entry name" value="Bira Bifunctional Protein, Domain 2"/>
    <property type="match status" value="1"/>
</dbReference>
<dbReference type="Gene3D" id="2.40.50.140">
    <property type="entry name" value="Nucleic acid-binding proteins"/>
    <property type="match status" value="1"/>
</dbReference>
<dbReference type="HAMAP" id="MF_00252">
    <property type="entry name" value="Lys_tRNA_synth_class2"/>
    <property type="match status" value="1"/>
</dbReference>
<dbReference type="InterPro" id="IPR004364">
    <property type="entry name" value="Aa-tRNA-synt_II"/>
</dbReference>
<dbReference type="InterPro" id="IPR006195">
    <property type="entry name" value="aa-tRNA-synth_II"/>
</dbReference>
<dbReference type="InterPro" id="IPR045864">
    <property type="entry name" value="aa-tRNA-synth_II/BPL/LPL"/>
</dbReference>
<dbReference type="InterPro" id="IPR025567">
    <property type="entry name" value="DUF4332"/>
</dbReference>
<dbReference type="InterPro" id="IPR002313">
    <property type="entry name" value="Lys-tRNA-ligase_II"/>
</dbReference>
<dbReference type="InterPro" id="IPR044136">
    <property type="entry name" value="Lys-tRNA-ligase_II_N"/>
</dbReference>
<dbReference type="InterPro" id="IPR018149">
    <property type="entry name" value="Lys-tRNA-synth_II_C"/>
</dbReference>
<dbReference type="InterPro" id="IPR012340">
    <property type="entry name" value="NA-bd_OB-fold"/>
</dbReference>
<dbReference type="InterPro" id="IPR004365">
    <property type="entry name" value="NA-bd_OB_tRNA"/>
</dbReference>
<dbReference type="NCBIfam" id="TIGR00499">
    <property type="entry name" value="lysS_bact"/>
    <property type="match status" value="1"/>
</dbReference>
<dbReference type="NCBIfam" id="NF001756">
    <property type="entry name" value="PRK00484.1"/>
    <property type="match status" value="1"/>
</dbReference>
<dbReference type="PANTHER" id="PTHR42918:SF15">
    <property type="entry name" value="LYSINE--TRNA LIGASE, CHLOROPLASTIC_MITOCHONDRIAL"/>
    <property type="match status" value="1"/>
</dbReference>
<dbReference type="PANTHER" id="PTHR42918">
    <property type="entry name" value="LYSYL-TRNA SYNTHETASE"/>
    <property type="match status" value="1"/>
</dbReference>
<dbReference type="Pfam" id="PF14229">
    <property type="entry name" value="DUF4332"/>
    <property type="match status" value="1"/>
</dbReference>
<dbReference type="Pfam" id="PF00152">
    <property type="entry name" value="tRNA-synt_2"/>
    <property type="match status" value="1"/>
</dbReference>
<dbReference type="Pfam" id="PF01336">
    <property type="entry name" value="tRNA_anti-codon"/>
    <property type="match status" value="1"/>
</dbReference>
<dbReference type="PRINTS" id="PR00982">
    <property type="entry name" value="TRNASYNTHLYS"/>
</dbReference>
<dbReference type="SUPFAM" id="SSF55681">
    <property type="entry name" value="Class II aaRS and biotin synthetases"/>
    <property type="match status" value="1"/>
</dbReference>
<dbReference type="SUPFAM" id="SSF50249">
    <property type="entry name" value="Nucleic acid-binding proteins"/>
    <property type="match status" value="1"/>
</dbReference>
<dbReference type="PROSITE" id="PS50862">
    <property type="entry name" value="AA_TRNA_LIGASE_II"/>
    <property type="match status" value="1"/>
</dbReference>
<organism>
    <name type="scientific">Bacteroides fragilis (strain YCH46)</name>
    <dbReference type="NCBI Taxonomy" id="295405"/>
    <lineage>
        <taxon>Bacteria</taxon>
        <taxon>Pseudomonadati</taxon>
        <taxon>Bacteroidota</taxon>
        <taxon>Bacteroidia</taxon>
        <taxon>Bacteroidales</taxon>
        <taxon>Bacteroidaceae</taxon>
        <taxon>Bacteroides</taxon>
    </lineage>
</organism>
<name>SYK_BACFR</name>
<protein>
    <recommendedName>
        <fullName evidence="1">Lysine--tRNA ligase</fullName>
        <ecNumber evidence="1">6.1.1.6</ecNumber>
    </recommendedName>
    <alternativeName>
        <fullName evidence="1">Lysyl-tRNA synthetase</fullName>
        <shortName evidence="1">LysRS</shortName>
    </alternativeName>
</protein>
<reference key="1">
    <citation type="journal article" date="2004" name="Proc. Natl. Acad. Sci. U.S.A.">
        <title>Genomic analysis of Bacteroides fragilis reveals extensive DNA inversions regulating cell surface adaptation.</title>
        <authorList>
            <person name="Kuwahara T."/>
            <person name="Yamashita A."/>
            <person name="Hirakawa H."/>
            <person name="Nakayama H."/>
            <person name="Toh H."/>
            <person name="Okada N."/>
            <person name="Kuhara S."/>
            <person name="Hattori M."/>
            <person name="Hayashi T."/>
            <person name="Ohnishi Y."/>
        </authorList>
    </citation>
    <scope>NUCLEOTIDE SEQUENCE [LARGE SCALE GENOMIC DNA]</scope>
    <source>
        <strain>YCH46</strain>
    </source>
</reference>
<gene>
    <name evidence="1" type="primary">lysS</name>
    <name type="ordered locus">BF3810</name>
</gene>
<keyword id="KW-0030">Aminoacyl-tRNA synthetase</keyword>
<keyword id="KW-0067">ATP-binding</keyword>
<keyword id="KW-0963">Cytoplasm</keyword>
<keyword id="KW-0436">Ligase</keyword>
<keyword id="KW-0460">Magnesium</keyword>
<keyword id="KW-0479">Metal-binding</keyword>
<keyword id="KW-0547">Nucleotide-binding</keyword>
<keyword id="KW-0648">Protein biosynthesis</keyword>
<proteinExistence type="inferred from homology"/>
<sequence length="575" mass="66232">MNILELSEQEIIRRNSLNELRAMGIEPYPAAEYVTNAFSTDIKAEFKDDETPRQVSVAGRMMSRRIMGKASFIELQDSKGRIQVYITRDDICPGEDKEMYNTVFKRLLDLGDFIGIEGFVFRTQMGEISIHAQKLTVLAKSIKPLPIVKYKDGVTYDSFEDPELRYRQRYVDLAVNEGVKDIFIKRSKVYSSMREYFNSKGYMEVETPILQAIAGGAAARPFMTHHNALDIPLYMRIASELYLKRLIVGGFEGVYEIGKNFRNEGMDRTHNPEFTCMEIYVAYKDYNWMMEFTEKMIEKICLDVNGTTEVKVGDNIINFKAPYKRVTMLGAIKEHTGYDLTGMNEEQIREVCKKLNMEIDDTMGKGKLIDEIFGEFCEGTYIQPTFITDYPIEMSPLTKKHRDNPELTERFELMVNGKELCNAYSELNDPIDQLERFEDQMKLSEKGDDEAMIIDKDFVRALEYGMPPTSGMGIGMDRLTMLMTGQSTIQEVLFFPQMRPEKVVPKDSASKFMELGITEEWVPVIQKAGYNQVADMKEVNPQKFHQDICGINKKYKLELTNPSVNDVAEWIQKIK</sequence>
<feature type="chain" id="PRO_1000012845" description="Lysine--tRNA ligase">
    <location>
        <begin position="1"/>
        <end position="575"/>
    </location>
</feature>
<feature type="binding site" evidence="1">
    <location>
        <position position="412"/>
    </location>
    <ligand>
        <name>Mg(2+)</name>
        <dbReference type="ChEBI" id="CHEBI:18420"/>
        <label>1</label>
    </ligand>
</feature>
<feature type="binding site" evidence="1">
    <location>
        <position position="419"/>
    </location>
    <ligand>
        <name>Mg(2+)</name>
        <dbReference type="ChEBI" id="CHEBI:18420"/>
        <label>1</label>
    </ligand>
</feature>
<feature type="binding site" evidence="1">
    <location>
        <position position="419"/>
    </location>
    <ligand>
        <name>Mg(2+)</name>
        <dbReference type="ChEBI" id="CHEBI:18420"/>
        <label>2</label>
    </ligand>
</feature>
<evidence type="ECO:0000255" key="1">
    <source>
        <dbReference type="HAMAP-Rule" id="MF_00252"/>
    </source>
</evidence>